<evidence type="ECO:0000255" key="1">
    <source>
        <dbReference type="HAMAP-Rule" id="MF_01576"/>
    </source>
</evidence>
<proteinExistence type="inferred from homology"/>
<feature type="chain" id="PRO_1000073607" description="Bifunctional protein FolD">
    <location>
        <begin position="1"/>
        <end position="282"/>
    </location>
</feature>
<feature type="binding site" evidence="1">
    <location>
        <begin position="164"/>
        <end position="166"/>
    </location>
    <ligand>
        <name>NADP(+)</name>
        <dbReference type="ChEBI" id="CHEBI:58349"/>
    </ligand>
</feature>
<feature type="binding site" evidence="1">
    <location>
        <position position="189"/>
    </location>
    <ligand>
        <name>NADP(+)</name>
        <dbReference type="ChEBI" id="CHEBI:58349"/>
    </ligand>
</feature>
<feature type="binding site" evidence="1">
    <location>
        <position position="230"/>
    </location>
    <ligand>
        <name>NADP(+)</name>
        <dbReference type="ChEBI" id="CHEBI:58349"/>
    </ligand>
</feature>
<accession>A8FLR4</accession>
<sequence length="282" mass="30337">MTLLDGKALSAKIKEELKEKNQFLKSKGIESCLAVILVGDNPASQTYVKSKAKACEECGIKSLVYHLNENTTQNELLALINTLNHDDSVHGILVQLPLPDHICKDLILESIISSKDVDGFHPINVGYLNLGLESGFLPCTPLGVMKLLKAYEIDLEGKDAVIIGASNIVGRPMATMLLNAGATVSVCHIKTKDLSLYTRQADLIIVAAGCVNLLRSDMVKEGVIVVDVGINRLESGKIVGDVDFEEVSKKSSYITPVPGGVGPMTIAMLLENTVKSAKNRLN</sequence>
<organism>
    <name type="scientific">Campylobacter jejuni subsp. jejuni serotype O:6 (strain 81116 / NCTC 11828)</name>
    <dbReference type="NCBI Taxonomy" id="407148"/>
    <lineage>
        <taxon>Bacteria</taxon>
        <taxon>Pseudomonadati</taxon>
        <taxon>Campylobacterota</taxon>
        <taxon>Epsilonproteobacteria</taxon>
        <taxon>Campylobacterales</taxon>
        <taxon>Campylobacteraceae</taxon>
        <taxon>Campylobacter</taxon>
    </lineage>
</organism>
<gene>
    <name evidence="1" type="primary">folD</name>
    <name type="ordered locus">C8J_0802</name>
</gene>
<keyword id="KW-0028">Amino-acid biosynthesis</keyword>
<keyword id="KW-0368">Histidine biosynthesis</keyword>
<keyword id="KW-0378">Hydrolase</keyword>
<keyword id="KW-0486">Methionine biosynthesis</keyword>
<keyword id="KW-0511">Multifunctional enzyme</keyword>
<keyword id="KW-0521">NADP</keyword>
<keyword id="KW-0554">One-carbon metabolism</keyword>
<keyword id="KW-0560">Oxidoreductase</keyword>
<keyword id="KW-0658">Purine biosynthesis</keyword>
<dbReference type="EC" id="1.5.1.5" evidence="1"/>
<dbReference type="EC" id="3.5.4.9" evidence="1"/>
<dbReference type="EMBL" id="CP000814">
    <property type="protein sequence ID" value="ABV52401.1"/>
    <property type="molecule type" value="Genomic_DNA"/>
</dbReference>
<dbReference type="RefSeq" id="WP_002852542.1">
    <property type="nucleotide sequence ID" value="NC_009839.1"/>
</dbReference>
<dbReference type="SMR" id="A8FLR4"/>
<dbReference type="KEGG" id="cju:C8J_0802"/>
<dbReference type="HOGENOM" id="CLU_034045_2_1_7"/>
<dbReference type="UniPathway" id="UPA00193"/>
<dbReference type="GO" id="GO:0005829">
    <property type="term" value="C:cytosol"/>
    <property type="evidence" value="ECO:0007669"/>
    <property type="project" value="TreeGrafter"/>
</dbReference>
<dbReference type="GO" id="GO:0004477">
    <property type="term" value="F:methenyltetrahydrofolate cyclohydrolase activity"/>
    <property type="evidence" value="ECO:0007669"/>
    <property type="project" value="UniProtKB-UniRule"/>
</dbReference>
<dbReference type="GO" id="GO:0004488">
    <property type="term" value="F:methylenetetrahydrofolate dehydrogenase (NADP+) activity"/>
    <property type="evidence" value="ECO:0007669"/>
    <property type="project" value="UniProtKB-UniRule"/>
</dbReference>
<dbReference type="GO" id="GO:0000105">
    <property type="term" value="P:L-histidine biosynthetic process"/>
    <property type="evidence" value="ECO:0007669"/>
    <property type="project" value="UniProtKB-KW"/>
</dbReference>
<dbReference type="GO" id="GO:0009086">
    <property type="term" value="P:methionine biosynthetic process"/>
    <property type="evidence" value="ECO:0007669"/>
    <property type="project" value="UniProtKB-KW"/>
</dbReference>
<dbReference type="GO" id="GO:0006164">
    <property type="term" value="P:purine nucleotide biosynthetic process"/>
    <property type="evidence" value="ECO:0007669"/>
    <property type="project" value="UniProtKB-KW"/>
</dbReference>
<dbReference type="GO" id="GO:0035999">
    <property type="term" value="P:tetrahydrofolate interconversion"/>
    <property type="evidence" value="ECO:0007669"/>
    <property type="project" value="UniProtKB-UniRule"/>
</dbReference>
<dbReference type="CDD" id="cd01080">
    <property type="entry name" value="NAD_bind_m-THF_DH_Cyclohyd"/>
    <property type="match status" value="1"/>
</dbReference>
<dbReference type="FunFam" id="3.40.50.720:FF:000094">
    <property type="entry name" value="Bifunctional protein FolD"/>
    <property type="match status" value="1"/>
</dbReference>
<dbReference type="FunFam" id="3.40.50.10860:FF:000005">
    <property type="entry name" value="C-1-tetrahydrofolate synthase, cytoplasmic, putative"/>
    <property type="match status" value="1"/>
</dbReference>
<dbReference type="Gene3D" id="3.40.50.10860">
    <property type="entry name" value="Leucine Dehydrogenase, chain A, domain 1"/>
    <property type="match status" value="1"/>
</dbReference>
<dbReference type="Gene3D" id="3.40.50.720">
    <property type="entry name" value="NAD(P)-binding Rossmann-like Domain"/>
    <property type="match status" value="1"/>
</dbReference>
<dbReference type="HAMAP" id="MF_01576">
    <property type="entry name" value="THF_DHG_CYH"/>
    <property type="match status" value="1"/>
</dbReference>
<dbReference type="InterPro" id="IPR046346">
    <property type="entry name" value="Aminoacid_DH-like_N_sf"/>
</dbReference>
<dbReference type="InterPro" id="IPR036291">
    <property type="entry name" value="NAD(P)-bd_dom_sf"/>
</dbReference>
<dbReference type="InterPro" id="IPR000672">
    <property type="entry name" value="THF_DH/CycHdrlase"/>
</dbReference>
<dbReference type="InterPro" id="IPR020630">
    <property type="entry name" value="THF_DH/CycHdrlase_cat_dom"/>
</dbReference>
<dbReference type="InterPro" id="IPR020867">
    <property type="entry name" value="THF_DH/CycHdrlase_CS"/>
</dbReference>
<dbReference type="InterPro" id="IPR020631">
    <property type="entry name" value="THF_DH/CycHdrlase_NAD-bd_dom"/>
</dbReference>
<dbReference type="NCBIfam" id="NF008058">
    <property type="entry name" value="PRK10792.1"/>
    <property type="match status" value="1"/>
</dbReference>
<dbReference type="NCBIfam" id="NF010763">
    <property type="entry name" value="PRK14166.1"/>
    <property type="match status" value="1"/>
</dbReference>
<dbReference type="NCBIfam" id="NF010783">
    <property type="entry name" value="PRK14186.1"/>
    <property type="match status" value="1"/>
</dbReference>
<dbReference type="NCBIfam" id="NF010787">
    <property type="entry name" value="PRK14191.1"/>
    <property type="match status" value="1"/>
</dbReference>
<dbReference type="PANTHER" id="PTHR48099:SF5">
    <property type="entry name" value="C-1-TETRAHYDROFOLATE SYNTHASE, CYTOPLASMIC"/>
    <property type="match status" value="1"/>
</dbReference>
<dbReference type="PANTHER" id="PTHR48099">
    <property type="entry name" value="C-1-TETRAHYDROFOLATE SYNTHASE, CYTOPLASMIC-RELATED"/>
    <property type="match status" value="1"/>
</dbReference>
<dbReference type="Pfam" id="PF00763">
    <property type="entry name" value="THF_DHG_CYH"/>
    <property type="match status" value="1"/>
</dbReference>
<dbReference type="Pfam" id="PF02882">
    <property type="entry name" value="THF_DHG_CYH_C"/>
    <property type="match status" value="1"/>
</dbReference>
<dbReference type="PRINTS" id="PR00085">
    <property type="entry name" value="THFDHDRGNASE"/>
</dbReference>
<dbReference type="SUPFAM" id="SSF53223">
    <property type="entry name" value="Aminoacid dehydrogenase-like, N-terminal domain"/>
    <property type="match status" value="1"/>
</dbReference>
<dbReference type="SUPFAM" id="SSF51735">
    <property type="entry name" value="NAD(P)-binding Rossmann-fold domains"/>
    <property type="match status" value="1"/>
</dbReference>
<dbReference type="PROSITE" id="PS00766">
    <property type="entry name" value="THF_DHG_CYH_1"/>
    <property type="match status" value="1"/>
</dbReference>
<dbReference type="PROSITE" id="PS00767">
    <property type="entry name" value="THF_DHG_CYH_2"/>
    <property type="match status" value="1"/>
</dbReference>
<name>FOLD_CAMJ8</name>
<protein>
    <recommendedName>
        <fullName evidence="1">Bifunctional protein FolD</fullName>
    </recommendedName>
    <domain>
        <recommendedName>
            <fullName evidence="1">Methylenetetrahydrofolate dehydrogenase</fullName>
            <ecNumber evidence="1">1.5.1.5</ecNumber>
        </recommendedName>
    </domain>
    <domain>
        <recommendedName>
            <fullName evidence="1">Methenyltetrahydrofolate cyclohydrolase</fullName>
            <ecNumber evidence="1">3.5.4.9</ecNumber>
        </recommendedName>
    </domain>
</protein>
<comment type="function">
    <text evidence="1">Catalyzes the oxidation of 5,10-methylenetetrahydrofolate to 5,10-methenyltetrahydrofolate and then the hydrolysis of 5,10-methenyltetrahydrofolate to 10-formyltetrahydrofolate.</text>
</comment>
<comment type="catalytic activity">
    <reaction evidence="1">
        <text>(6R)-5,10-methylene-5,6,7,8-tetrahydrofolate + NADP(+) = (6R)-5,10-methenyltetrahydrofolate + NADPH</text>
        <dbReference type="Rhea" id="RHEA:22812"/>
        <dbReference type="ChEBI" id="CHEBI:15636"/>
        <dbReference type="ChEBI" id="CHEBI:57455"/>
        <dbReference type="ChEBI" id="CHEBI:57783"/>
        <dbReference type="ChEBI" id="CHEBI:58349"/>
        <dbReference type="EC" id="1.5.1.5"/>
    </reaction>
</comment>
<comment type="catalytic activity">
    <reaction evidence="1">
        <text>(6R)-5,10-methenyltetrahydrofolate + H2O = (6R)-10-formyltetrahydrofolate + H(+)</text>
        <dbReference type="Rhea" id="RHEA:23700"/>
        <dbReference type="ChEBI" id="CHEBI:15377"/>
        <dbReference type="ChEBI" id="CHEBI:15378"/>
        <dbReference type="ChEBI" id="CHEBI:57455"/>
        <dbReference type="ChEBI" id="CHEBI:195366"/>
        <dbReference type="EC" id="3.5.4.9"/>
    </reaction>
</comment>
<comment type="pathway">
    <text evidence="1">One-carbon metabolism; tetrahydrofolate interconversion.</text>
</comment>
<comment type="subunit">
    <text evidence="1">Homodimer.</text>
</comment>
<comment type="similarity">
    <text evidence="1">Belongs to the tetrahydrofolate dehydrogenase/cyclohydrolase family.</text>
</comment>
<reference key="1">
    <citation type="journal article" date="2007" name="J. Bacteriol.">
        <title>The complete genome sequence of Campylobacter jejuni strain 81116 (NCTC11828).</title>
        <authorList>
            <person name="Pearson B.M."/>
            <person name="Gaskin D.J.H."/>
            <person name="Segers R.P.A.M."/>
            <person name="Wells J.M."/>
            <person name="Nuijten P.J.M."/>
            <person name="van Vliet A.H.M."/>
        </authorList>
    </citation>
    <scope>NUCLEOTIDE SEQUENCE [LARGE SCALE GENOMIC DNA]</scope>
    <source>
        <strain>81116 / NCTC 11828</strain>
    </source>
</reference>